<proteinExistence type="evidence at protein level"/>
<dbReference type="GO" id="GO:0005576">
    <property type="term" value="C:extracellular region"/>
    <property type="evidence" value="ECO:0007669"/>
    <property type="project" value="UniProtKB-SubCell"/>
</dbReference>
<dbReference type="GO" id="GO:0090729">
    <property type="term" value="F:toxin activity"/>
    <property type="evidence" value="ECO:0007669"/>
    <property type="project" value="UniProtKB-KW"/>
</dbReference>
<sequence>LSFQQVKEKVCKVEAKIGKKLPFC</sequence>
<comment type="function">
    <text evidence="1 2">Wasp venom peptide that acts as a potent mast cell degranulating peptide without hemolytic activity (By similarity). Shows neuroprotective effect, since it prevents the death of dopaminergic neurons of the brain substantia nigra region and recovers motor deficit in a 6-hydroxydopamine (6-OHDA)-induced murine model of Parkinson disease (PubMed:32867207).</text>
</comment>
<comment type="subcellular location">
    <subcellularLocation>
        <location evidence="2">Secreted</location>
    </subcellularLocation>
</comment>
<comment type="tissue specificity">
    <text evidence="5">Expressed by the venom gland.</text>
</comment>
<comment type="mass spectrometry"/>
<comment type="similarity">
    <text evidence="4">Belongs to the sylv/frat/paul family.</text>
</comment>
<accession>P0DRB2</accession>
<keyword id="KW-0027">Amidation</keyword>
<keyword id="KW-0903">Direct protein sequencing</keyword>
<keyword id="KW-1015">Disulfide bond</keyword>
<keyword id="KW-0467">Mast cell degranulation</keyword>
<keyword id="KW-0964">Secreted</keyword>
<keyword id="KW-0800">Toxin</keyword>
<evidence type="ECO:0000250" key="1">
    <source>
        <dbReference type="UniProtKB" id="P0C1R2"/>
    </source>
</evidence>
<evidence type="ECO:0000269" key="2">
    <source>
    </source>
</evidence>
<evidence type="ECO:0000303" key="3">
    <source>
    </source>
</evidence>
<evidence type="ECO:0000305" key="4"/>
<evidence type="ECO:0000305" key="5">
    <source>
    </source>
</evidence>
<protein>
    <recommendedName>
        <fullName evidence="3">Fraternine</fullName>
    </recommendedName>
</protein>
<feature type="peptide" id="PRO_0000459137" description="Fraternine" evidence="2">
    <location>
        <begin position="1"/>
        <end position="24"/>
    </location>
</feature>
<feature type="modified residue" description="Cysteine amide" evidence="2">
    <location>
        <position position="24"/>
    </location>
</feature>
<feature type="disulfide bond" evidence="5">
    <location>
        <begin position="11"/>
        <end position="24"/>
    </location>
</feature>
<feature type="unsure residue" description="Leu or Ile" evidence="2">
    <location>
        <position position="1"/>
    </location>
</feature>
<feature type="unsure residue" description="Ile of Leu" evidence="2">
    <location>
        <position position="17"/>
    </location>
</feature>
<feature type="unsure residue" description="Leu or Ile" evidence="2">
    <location>
        <position position="21"/>
    </location>
</feature>
<name>FRAT_PARFA</name>
<reference key="1">
    <citation type="journal article" date="2020" name="Toxins">
        <title>Fraternine, a novel wasp peptide, protects against motor impairments in 6-OHDA model of parkinsonism.</title>
        <authorList>
            <person name="Biolchi A.M."/>
            <person name="de Oliveira D.G.R."/>
            <person name="Amaral H.O."/>
            <person name="Campos G.A.A."/>
            <person name="Goncalves J.C."/>
            <person name="de Souza A.C.B."/>
            <person name="Lima M.R."/>
            <person name="Silva L.P."/>
            <person name="Mortari M.R."/>
        </authorList>
    </citation>
    <scope>PROTEIN SEQUENCE</scope>
    <scope>FUNCTION</scope>
    <scope>BIOASSAY</scope>
    <scope>SUBCELLULAR LOCATION</scope>
    <scope>MASS SPECTROMETRY</scope>
    <scope>AMIDATION AT CYS-24</scope>
    <scope>PROBABLE DISULFIDE BOND</scope>
    <source>
        <tissue>Venom</tissue>
    </source>
</reference>
<organism>
    <name type="scientific">Parachartergus fraternus</name>
    <name type="common">Artistic wasp</name>
    <name type="synonym">Chartergus fraternus</name>
    <dbReference type="NCBI Taxonomy" id="91406"/>
    <lineage>
        <taxon>Eukaryota</taxon>
        <taxon>Metazoa</taxon>
        <taxon>Ecdysozoa</taxon>
        <taxon>Arthropoda</taxon>
        <taxon>Hexapoda</taxon>
        <taxon>Insecta</taxon>
        <taxon>Pterygota</taxon>
        <taxon>Neoptera</taxon>
        <taxon>Endopterygota</taxon>
        <taxon>Hymenoptera</taxon>
        <taxon>Apocrita</taxon>
        <taxon>Aculeata</taxon>
        <taxon>Vespoidea</taxon>
        <taxon>Vespidae</taxon>
        <taxon>Polistinae</taxon>
        <taxon>Epiponini</taxon>
        <taxon>Parachartergus</taxon>
    </lineage>
</organism>